<sequence length="1141" mass="124039">MINRDNKKAITKKGMISNRLNKFSIRKYTVGTASILVGTTLIFGLGNQEAKAAENTSTENAKQDDATTSDNKEVVSETENNSTTENDSTNPIKKETNTDSQPEAKEESTTSSTQQQQNNVTATTETKPQNIEKENVKPSTDKTATEDTSVILEEKKAPNYTNNDVTTKPSTSEIQTKPTTPQESTNIENSQPQPTPSKVDNQVTDATNPKEPVNVSKEELKNNPEKLKELVRNDNNTDRSTKPVATAPTSVAPKRLNAKMRFAVAQPAAVASNNVNDLITVTKQTIKVGDGKDNVAAAHDGKDIEYDTEFTIDNKVKKGDTMTINYDKNVIPSDLTDKNDPIDITDPSGEVIAKGTFDKATKQITYTFTDYVDKYEDIKARLTLYSYIDKQAVPNETSLNLTFATAGKETSQNVSVDYQDPMVHGDSNIQSIFTKLDENKQTIEQQIYVNPLKKTATNTKVDIAGSQVDDYGNIKLGNGSTIIDQNTEIKVYKVNPNQQLPQSNRIYDFSQYEDVTSQFDNKKSFSNNVATLDFGDINSAYIIKVVSKYTPTSDGELDIAQGTSMRTTDKYGYYNYAGYSNFIVTSNDTGGGDGTVKPEEKLYKIGDYVWEDVDKDGVQGTDSKEKPMANVLVTLTYPDGTTKSVRTDANGHYEFGGLKDGETYTVKFETPAGYLPTKVNGTTDGEKDSNGSSITVKINGKDDMSLDTGFYKEPKYNLGDYVWEDTNKDGIQDANEPGIKDVKVTLKDSTGKVIGTTTTDASGKYKFTDLDNGNYTVEFETPAGYTPTVKNTTAEDKDSNGLTTTGVIKDADNMTLDSGFYKTPKYSLGDYVWYDSNKDGKQDSTEKGIKDVKVTLLNEKGEVIGTTKTDENGKYRFDNLDSGKYKVIFEKPAGLTQTVTNTTEDDKDADGGEVDVTITDHDDFILDNGYFEEDTSDSDSDSDSDSDSDSDSDSDSDSDSDSDSDSDSDSDSDSDSDSDSDSDSDSDSDSDSDSDSDSDSDSDSDSDSDSDSDSDSDSDSDSDSDSDSDSDSDSDSDSDSDSDSDSDSDSDSDSDSDSDSDSDSDSDSDSDSDSDSDSDSDAGKHTPVKPMSTTKDHHNKAKALPETGSENNGSNNATLFGGLFAALGSLLLFGRRKKQNK</sequence>
<evidence type="ECO:0000250" key="1">
    <source>
        <dbReference type="UniProtKB" id="O86489"/>
    </source>
</evidence>
<evidence type="ECO:0000255" key="2"/>
<evidence type="ECO:0000255" key="3">
    <source>
        <dbReference type="PROSITE-ProRule" id="PRU00477"/>
    </source>
</evidence>
<evidence type="ECO:0000256" key="4">
    <source>
        <dbReference type="SAM" id="MobiDB-lite"/>
    </source>
</evidence>
<evidence type="ECO:0000269" key="5">
    <source>
    </source>
</evidence>
<evidence type="ECO:0000305" key="6"/>
<evidence type="ECO:0007829" key="7">
    <source>
        <dbReference type="PDB" id="5WTA"/>
    </source>
</evidence>
<evidence type="ECO:0007829" key="8">
    <source>
        <dbReference type="PDB" id="5WTB"/>
    </source>
</evidence>
<name>SDRE_STAAM</name>
<feature type="signal peptide" evidence="2">
    <location>
        <begin position="1"/>
        <end position="52"/>
    </location>
</feature>
<feature type="chain" id="PRO_0000281165" description="Serine-aspartate repeat-containing protein E">
    <location>
        <begin position="53"/>
        <end position="1107"/>
    </location>
</feature>
<feature type="propeptide" id="PRO_0000281166" description="Removed by sortase" evidence="3">
    <location>
        <begin position="1108"/>
        <end position="1141"/>
    </location>
</feature>
<feature type="domain" description="CNA-B 1">
    <location>
        <begin position="602"/>
        <end position="714"/>
    </location>
</feature>
<feature type="domain" description="CNA-B 2">
    <location>
        <begin position="715"/>
        <end position="824"/>
    </location>
</feature>
<feature type="domain" description="CNA-B 3">
    <location>
        <begin position="825"/>
        <end position="935"/>
    </location>
</feature>
<feature type="region of interest" description="Ligand binding A region">
    <location>
        <begin position="53"/>
        <end position="601"/>
    </location>
</feature>
<feature type="region of interest" description="Disordered" evidence="4">
    <location>
        <begin position="54"/>
        <end position="248"/>
    </location>
</feature>
<feature type="region of interest" description="Disordered" evidence="4">
    <location>
        <begin position="929"/>
        <end position="1117"/>
    </location>
</feature>
<feature type="short sequence motif" description="YSIRK-G/S signaling motif" evidence="1">
    <location>
        <begin position="23"/>
        <end position="34"/>
    </location>
</feature>
<feature type="short sequence motif" description="LPXTG sorting signal" evidence="3">
    <location>
        <begin position="1104"/>
        <end position="1108"/>
    </location>
</feature>
<feature type="compositionally biased region" description="Basic and acidic residues" evidence="4">
    <location>
        <begin position="61"/>
        <end position="75"/>
    </location>
</feature>
<feature type="compositionally biased region" description="Low complexity" evidence="4">
    <location>
        <begin position="77"/>
        <end position="90"/>
    </location>
</feature>
<feature type="compositionally biased region" description="Basic and acidic residues" evidence="4">
    <location>
        <begin position="92"/>
        <end position="108"/>
    </location>
</feature>
<feature type="compositionally biased region" description="Low complexity" evidence="4">
    <location>
        <begin position="109"/>
        <end position="126"/>
    </location>
</feature>
<feature type="compositionally biased region" description="Basic and acidic residues" evidence="4">
    <location>
        <begin position="130"/>
        <end position="145"/>
    </location>
</feature>
<feature type="compositionally biased region" description="Polar residues" evidence="4">
    <location>
        <begin position="159"/>
        <end position="207"/>
    </location>
</feature>
<feature type="compositionally biased region" description="Basic and acidic residues" evidence="4">
    <location>
        <begin position="216"/>
        <end position="241"/>
    </location>
</feature>
<feature type="compositionally biased region" description="Acidic residues" evidence="4">
    <location>
        <begin position="930"/>
        <end position="1080"/>
    </location>
</feature>
<feature type="modified residue" description="Pentaglycyl murein peptidoglycan amidated threonine" evidence="3">
    <location>
        <position position="1107"/>
    </location>
</feature>
<feature type="helix" evidence="7">
    <location>
        <begin position="276"/>
        <end position="278"/>
    </location>
</feature>
<feature type="strand" evidence="7">
    <location>
        <begin position="279"/>
        <end position="290"/>
    </location>
</feature>
<feature type="helix" evidence="7">
    <location>
        <begin position="291"/>
        <end position="293"/>
    </location>
</feature>
<feature type="strand" evidence="7">
    <location>
        <begin position="297"/>
        <end position="312"/>
    </location>
</feature>
<feature type="strand" evidence="7">
    <location>
        <begin position="321"/>
        <end position="325"/>
    </location>
</feature>
<feature type="strand" evidence="7">
    <location>
        <begin position="330"/>
        <end position="332"/>
    </location>
</feature>
<feature type="strand" evidence="8">
    <location>
        <begin position="347"/>
        <end position="349"/>
    </location>
</feature>
<feature type="strand" evidence="7">
    <location>
        <begin position="351"/>
        <end position="358"/>
    </location>
</feature>
<feature type="turn" evidence="7">
    <location>
        <begin position="359"/>
        <end position="362"/>
    </location>
</feature>
<feature type="strand" evidence="7">
    <location>
        <begin position="363"/>
        <end position="368"/>
    </location>
</feature>
<feature type="helix" evidence="7">
    <location>
        <begin position="371"/>
        <end position="374"/>
    </location>
</feature>
<feature type="strand" evidence="7">
    <location>
        <begin position="376"/>
        <end position="388"/>
    </location>
</feature>
<feature type="turn" evidence="7">
    <location>
        <begin position="390"/>
        <end position="392"/>
    </location>
</feature>
<feature type="strand" evidence="7">
    <location>
        <begin position="398"/>
        <end position="405"/>
    </location>
</feature>
<feature type="strand" evidence="7">
    <location>
        <begin position="408"/>
        <end position="415"/>
    </location>
</feature>
<feature type="strand" evidence="7">
    <location>
        <begin position="422"/>
        <end position="424"/>
    </location>
</feature>
<feature type="strand" evidence="7">
    <location>
        <begin position="427"/>
        <end position="437"/>
    </location>
</feature>
<feature type="turn" evidence="7">
    <location>
        <begin position="438"/>
        <end position="441"/>
    </location>
</feature>
<feature type="strand" evidence="7">
    <location>
        <begin position="442"/>
        <end position="450"/>
    </location>
</feature>
<feature type="strand" evidence="7">
    <location>
        <begin position="456"/>
        <end position="468"/>
    </location>
</feature>
<feature type="strand" evidence="8">
    <location>
        <begin position="480"/>
        <end position="482"/>
    </location>
</feature>
<feature type="strand" evidence="7">
    <location>
        <begin position="487"/>
        <end position="493"/>
    </location>
</feature>
<feature type="helix" evidence="7">
    <location>
        <begin position="509"/>
        <end position="511"/>
    </location>
</feature>
<feature type="strand" evidence="7">
    <location>
        <begin position="512"/>
        <end position="514"/>
    </location>
</feature>
<feature type="helix" evidence="7">
    <location>
        <begin position="516"/>
        <end position="519"/>
    </location>
</feature>
<feature type="strand" evidence="7">
    <location>
        <begin position="522"/>
        <end position="526"/>
    </location>
</feature>
<feature type="strand" evidence="7">
    <location>
        <begin position="529"/>
        <end position="537"/>
    </location>
</feature>
<feature type="strand" evidence="7">
    <location>
        <begin position="541"/>
        <end position="548"/>
    </location>
</feature>
<feature type="strand" evidence="7">
    <location>
        <begin position="558"/>
        <end position="568"/>
    </location>
</feature>
<feature type="strand" evidence="7">
    <location>
        <begin position="574"/>
        <end position="585"/>
    </location>
</feature>
<reference key="1">
    <citation type="journal article" date="2001" name="Lancet">
        <title>Whole genome sequencing of meticillin-resistant Staphylococcus aureus.</title>
        <authorList>
            <person name="Kuroda M."/>
            <person name="Ohta T."/>
            <person name="Uchiyama I."/>
            <person name="Baba T."/>
            <person name="Yuzawa H."/>
            <person name="Kobayashi I."/>
            <person name="Cui L."/>
            <person name="Oguchi A."/>
            <person name="Aoki K."/>
            <person name="Nagai Y."/>
            <person name="Lian J.-Q."/>
            <person name="Ito T."/>
            <person name="Kanamori M."/>
            <person name="Matsumaru H."/>
            <person name="Maruyama A."/>
            <person name="Murakami H."/>
            <person name="Hosoyama A."/>
            <person name="Mizutani-Ui Y."/>
            <person name="Takahashi N.K."/>
            <person name="Sawano T."/>
            <person name="Inoue R."/>
            <person name="Kaito C."/>
            <person name="Sekimizu K."/>
            <person name="Hirakawa H."/>
            <person name="Kuhara S."/>
            <person name="Goto S."/>
            <person name="Yabuzaki J."/>
            <person name="Kanehisa M."/>
            <person name="Yamashita A."/>
            <person name="Oshima K."/>
            <person name="Furuya K."/>
            <person name="Yoshino C."/>
            <person name="Shiba T."/>
            <person name="Hattori M."/>
            <person name="Ogasawara N."/>
            <person name="Hayashi H."/>
            <person name="Hiramatsu K."/>
        </authorList>
    </citation>
    <scope>NUCLEOTIDE SEQUENCE [LARGE SCALE GENOMIC DNA]</scope>
    <source>
        <strain>Mu50 / ATCC 700699</strain>
    </source>
</reference>
<reference key="2">
    <citation type="journal article" date="2017" name="Biochem. J.">
        <title>Staphylococcus aureus SdrE captures complement factor H's C-terminus via a novel 'close, dock, lock and latch' mechanism for complement evasion.</title>
        <authorList>
            <person name="Zhang Y."/>
            <person name="Wu M."/>
            <person name="Hang T."/>
            <person name="Wang C."/>
            <person name="Yang Y."/>
            <person name="Pan W."/>
            <person name="Zang J."/>
            <person name="Zhang M."/>
            <person name="Zhang X."/>
        </authorList>
    </citation>
    <scope>X-RAY CRYSTALLOGRAPHY (2.30 ANGSTROMS) OF 270-599</scope>
    <scope>FUNCTION</scope>
    <scope>INTERACTION WITH HOST CFAH</scope>
</reference>
<comment type="function">
    <text evidence="1 5">Cell surface-associated calcium-binding protein which plays an important role in adhesion and pathogenesis. Contributes to the resistance to killing by innate immune components in blood and thus attenuates bacterial clearance by interacting with host complement factor H/CFAH and modulating its activity (PubMed:28258151). Inhibits also bacterial opsonization and killing by interacting with host complement regulator C4BPA and thus inhibiting classical complement pathway activation (By similarity).</text>
</comment>
<comment type="subunit">
    <text evidence="1 5">Interacts with host complement factor H/CFAH (via C-terminus) (PubMed:28258151). Interacts with host complement regulator C4BPA (By similarity).</text>
</comment>
<comment type="interaction">
    <interactant intactId="EBI-26369465">
        <id>Q932F7</id>
    </interactant>
    <interactant intactId="EBI-1223708">
        <id>P08603</id>
        <label>CFH</label>
    </interactant>
    <organismsDiffer>true</organismsDiffer>
    <experiments>4</experiments>
</comment>
<comment type="subcellular location">
    <subcellularLocation>
        <location evidence="3">Secreted</location>
        <location evidence="3">Cell wall</location>
        <topology evidence="3">Peptidoglycan-anchor</topology>
    </subcellularLocation>
    <text evidence="1">Anchored to the cell wall by sortase A (By similarity).</text>
</comment>
<comment type="similarity">
    <text evidence="6">Belongs to the serine-aspartate repeat-containing protein (SDr) family.</text>
</comment>
<organism>
    <name type="scientific">Staphylococcus aureus (strain Mu50 / ATCC 700699)</name>
    <dbReference type="NCBI Taxonomy" id="158878"/>
    <lineage>
        <taxon>Bacteria</taxon>
        <taxon>Bacillati</taxon>
        <taxon>Bacillota</taxon>
        <taxon>Bacilli</taxon>
        <taxon>Bacillales</taxon>
        <taxon>Staphylococcaceae</taxon>
        <taxon>Staphylococcus</taxon>
    </lineage>
</organism>
<gene>
    <name type="primary">sdrE</name>
    <name type="ordered locus">SAV0563</name>
</gene>
<proteinExistence type="evidence at protein level"/>
<protein>
    <recommendedName>
        <fullName>Serine-aspartate repeat-containing protein E</fullName>
    </recommendedName>
</protein>
<dbReference type="EMBL" id="BA000017">
    <property type="protein sequence ID" value="BAB56725.1"/>
    <property type="molecule type" value="Genomic_DNA"/>
</dbReference>
<dbReference type="RefSeq" id="WP_000610237.1">
    <property type="nucleotide sequence ID" value="NC_002758.2"/>
</dbReference>
<dbReference type="PDB" id="5WTA">
    <property type="method" value="X-ray"/>
    <property type="resolution" value="2.30 A"/>
    <property type="chains" value="A/B/C/D=270-599"/>
</dbReference>
<dbReference type="PDB" id="5WTB">
    <property type="method" value="X-ray"/>
    <property type="resolution" value="3.30 A"/>
    <property type="chains" value="A/B/C/D=270-599"/>
</dbReference>
<dbReference type="PDBsum" id="5WTA"/>
<dbReference type="PDBsum" id="5WTB"/>
<dbReference type="SMR" id="Q932F7"/>
<dbReference type="IntAct" id="Q932F7">
    <property type="interactions" value="1"/>
</dbReference>
<dbReference type="MINT" id="Q932F7"/>
<dbReference type="KEGG" id="sav:SAV0563"/>
<dbReference type="HOGENOM" id="CLU_004137_1_1_9"/>
<dbReference type="PhylomeDB" id="Q932F7"/>
<dbReference type="PRO" id="PR:Q932F7"/>
<dbReference type="Proteomes" id="UP000002481">
    <property type="component" value="Chromosome"/>
</dbReference>
<dbReference type="GO" id="GO:0005576">
    <property type="term" value="C:extracellular region"/>
    <property type="evidence" value="ECO:0007669"/>
    <property type="project" value="UniProtKB-KW"/>
</dbReference>
<dbReference type="GO" id="GO:0007155">
    <property type="term" value="P:cell adhesion"/>
    <property type="evidence" value="ECO:0007669"/>
    <property type="project" value="InterPro"/>
</dbReference>
<dbReference type="Gene3D" id="2.60.40.1280">
    <property type="match status" value="1"/>
</dbReference>
<dbReference type="Gene3D" id="2.60.40.1290">
    <property type="match status" value="1"/>
</dbReference>
<dbReference type="Gene3D" id="2.60.40.10">
    <property type="entry name" value="Immunoglobulins"/>
    <property type="match status" value="3"/>
</dbReference>
<dbReference type="InterPro" id="IPR011266">
    <property type="entry name" value="Adhesin_Fg-bd_dom_2"/>
</dbReference>
<dbReference type="InterPro" id="IPR008966">
    <property type="entry name" value="Adhesion_dom_sf"/>
</dbReference>
<dbReference type="InterPro" id="IPR011252">
    <property type="entry name" value="Fibrogen-bd_dom1"/>
</dbReference>
<dbReference type="InterPro" id="IPR013783">
    <property type="entry name" value="Ig-like_fold"/>
</dbReference>
<dbReference type="InterPro" id="IPR019931">
    <property type="entry name" value="LPXTG_anchor"/>
</dbReference>
<dbReference type="InterPro" id="IPR050972">
    <property type="entry name" value="SDr-like"/>
</dbReference>
<dbReference type="InterPro" id="IPR033764">
    <property type="entry name" value="Sdr_B"/>
</dbReference>
<dbReference type="InterPro" id="IPR041171">
    <property type="entry name" value="SDR_Ig"/>
</dbReference>
<dbReference type="InterPro" id="IPR005877">
    <property type="entry name" value="YSIRK_signal_dom"/>
</dbReference>
<dbReference type="NCBIfam" id="TIGR01167">
    <property type="entry name" value="LPXTG_anchor"/>
    <property type="match status" value="1"/>
</dbReference>
<dbReference type="NCBIfam" id="TIGR01168">
    <property type="entry name" value="YSIRK_signal"/>
    <property type="match status" value="1"/>
</dbReference>
<dbReference type="PANTHER" id="PTHR34403">
    <property type="entry name" value="TOL-PAL SYSTEM PROTEIN TOLA"/>
    <property type="match status" value="1"/>
</dbReference>
<dbReference type="PANTHER" id="PTHR34403:SF8">
    <property type="entry name" value="TOL-PAL SYSTEM PROTEIN TOLA"/>
    <property type="match status" value="1"/>
</dbReference>
<dbReference type="Pfam" id="PF17961">
    <property type="entry name" value="Big_8"/>
    <property type="match status" value="1"/>
</dbReference>
<dbReference type="Pfam" id="PF00746">
    <property type="entry name" value="Gram_pos_anchor"/>
    <property type="match status" value="1"/>
</dbReference>
<dbReference type="Pfam" id="PF17210">
    <property type="entry name" value="SdrD_B"/>
    <property type="match status" value="3"/>
</dbReference>
<dbReference type="Pfam" id="PF10425">
    <property type="entry name" value="SdrG_C_C"/>
    <property type="match status" value="1"/>
</dbReference>
<dbReference type="Pfam" id="PF04650">
    <property type="entry name" value="YSIRK_signal"/>
    <property type="match status" value="1"/>
</dbReference>
<dbReference type="SUPFAM" id="SSF49401">
    <property type="entry name" value="Bacterial adhesins"/>
    <property type="match status" value="2"/>
</dbReference>
<dbReference type="SUPFAM" id="SSF117074">
    <property type="entry name" value="Hypothetical protein PA1324"/>
    <property type="match status" value="3"/>
</dbReference>
<dbReference type="PROSITE" id="PS50847">
    <property type="entry name" value="GRAM_POS_ANCHORING"/>
    <property type="match status" value="1"/>
</dbReference>
<accession>Q932F7</accession>
<keyword id="KW-0002">3D-structure</keyword>
<keyword id="KW-0106">Calcium</keyword>
<keyword id="KW-0134">Cell wall</keyword>
<keyword id="KW-0572">Peptidoglycan-anchor</keyword>
<keyword id="KW-0677">Repeat</keyword>
<keyword id="KW-0964">Secreted</keyword>
<keyword id="KW-0732">Signal</keyword>
<keyword id="KW-0843">Virulence</keyword>